<reference key="1">
    <citation type="submission" date="2006-08" db="EMBL/GenBank/DDBJ databases">
        <title>Complete sequence of chromosome 1 of Shewanella sp. MR-7.</title>
        <authorList>
            <person name="Copeland A."/>
            <person name="Lucas S."/>
            <person name="Lapidus A."/>
            <person name="Barry K."/>
            <person name="Detter J.C."/>
            <person name="Glavina del Rio T."/>
            <person name="Hammon N."/>
            <person name="Israni S."/>
            <person name="Dalin E."/>
            <person name="Tice H."/>
            <person name="Pitluck S."/>
            <person name="Kiss H."/>
            <person name="Brettin T."/>
            <person name="Bruce D."/>
            <person name="Han C."/>
            <person name="Tapia R."/>
            <person name="Gilna P."/>
            <person name="Schmutz J."/>
            <person name="Larimer F."/>
            <person name="Land M."/>
            <person name="Hauser L."/>
            <person name="Kyrpides N."/>
            <person name="Mikhailova N."/>
            <person name="Nealson K."/>
            <person name="Konstantinidis K."/>
            <person name="Klappenbach J."/>
            <person name="Tiedje J."/>
            <person name="Richardson P."/>
        </authorList>
    </citation>
    <scope>NUCLEOTIDE SEQUENCE [LARGE SCALE GENOMIC DNA]</scope>
    <source>
        <strain>MR-7</strain>
    </source>
</reference>
<proteinExistence type="inferred from homology"/>
<protein>
    <recommendedName>
        <fullName evidence="1">UPF0231 protein Shewmr7_3366</fullName>
    </recommendedName>
</protein>
<accession>Q0HRA7</accession>
<dbReference type="EMBL" id="CP000444">
    <property type="protein sequence ID" value="ABI44348.1"/>
    <property type="molecule type" value="Genomic_DNA"/>
</dbReference>
<dbReference type="KEGG" id="shm:Shewmr7_3366"/>
<dbReference type="HOGENOM" id="CLU_139226_0_0_6"/>
<dbReference type="HAMAP" id="MF_01053">
    <property type="entry name" value="UPF0231"/>
    <property type="match status" value="1"/>
</dbReference>
<dbReference type="InterPro" id="IPR008249">
    <property type="entry name" value="UPF0231"/>
</dbReference>
<dbReference type="NCBIfam" id="NF003581">
    <property type="entry name" value="PRK05248.3-2"/>
    <property type="match status" value="1"/>
</dbReference>
<dbReference type="Pfam" id="PF06062">
    <property type="entry name" value="UPF0231"/>
    <property type="match status" value="1"/>
</dbReference>
<dbReference type="PIRSF" id="PIRSF006287">
    <property type="entry name" value="UCP006287"/>
    <property type="match status" value="1"/>
</dbReference>
<evidence type="ECO:0000255" key="1">
    <source>
        <dbReference type="HAMAP-Rule" id="MF_01053"/>
    </source>
</evidence>
<name>Y3366_SHESR</name>
<comment type="similarity">
    <text evidence="1">Belongs to the UPF0231 family.</text>
</comment>
<organism>
    <name type="scientific">Shewanella sp. (strain MR-7)</name>
    <dbReference type="NCBI Taxonomy" id="60481"/>
    <lineage>
        <taxon>Bacteria</taxon>
        <taxon>Pseudomonadati</taxon>
        <taxon>Pseudomonadota</taxon>
        <taxon>Gammaproteobacteria</taxon>
        <taxon>Alteromonadales</taxon>
        <taxon>Shewanellaceae</taxon>
        <taxon>Shewanella</taxon>
    </lineage>
</organism>
<sequence length="124" mass="14390">MEYEFRRNSLTGTYLASFSMDHEVLGQWFSEELGPELAKIQQVLDIIKDIQAGKRDSWRLIGGDLTLDLDEEQARIYANALGFEQEYELEESMSLYDAESEAYCGLEDLEEALLSWYKFVEKGR</sequence>
<feature type="chain" id="PRO_1000064370" description="UPF0231 protein Shewmr7_3366">
    <location>
        <begin position="1"/>
        <end position="124"/>
    </location>
</feature>
<gene>
    <name type="ordered locus">Shewmr7_3366</name>
</gene>